<comment type="function">
    <text evidence="1">Catalyzes the condensation reaction of fatty acid synthesis by the addition to an acyl acceptor of two carbons from malonyl-ACP. Catalyzes the first condensation reaction which initiates fatty acid synthesis and may therefore play a role in governing the total rate of fatty acid production. Possesses both acetoacetyl-ACP synthase and acetyl transacylase activities. Its substrate specificity determines the biosynthesis of branched-chain and/or straight-chain of fatty acids.</text>
</comment>
<comment type="catalytic activity">
    <reaction evidence="1">
        <text>malonyl-[ACP] + acetyl-CoA + H(+) = 3-oxobutanoyl-[ACP] + CO2 + CoA</text>
        <dbReference type="Rhea" id="RHEA:12080"/>
        <dbReference type="Rhea" id="RHEA-COMP:9623"/>
        <dbReference type="Rhea" id="RHEA-COMP:9625"/>
        <dbReference type="ChEBI" id="CHEBI:15378"/>
        <dbReference type="ChEBI" id="CHEBI:16526"/>
        <dbReference type="ChEBI" id="CHEBI:57287"/>
        <dbReference type="ChEBI" id="CHEBI:57288"/>
        <dbReference type="ChEBI" id="CHEBI:78449"/>
        <dbReference type="ChEBI" id="CHEBI:78450"/>
        <dbReference type="EC" id="2.3.1.180"/>
    </reaction>
</comment>
<comment type="pathway">
    <text evidence="1">Lipid metabolism; fatty acid biosynthesis.</text>
</comment>
<comment type="subunit">
    <text evidence="1">Homodimer.</text>
</comment>
<comment type="subcellular location">
    <subcellularLocation>
        <location evidence="1">Cytoplasm</location>
    </subcellularLocation>
</comment>
<comment type="domain">
    <text evidence="1">The last Arg residue of the ACP-binding site is essential for the weak association between ACP/AcpP and FabH.</text>
</comment>
<comment type="similarity">
    <text evidence="1">Belongs to the thiolase-like superfamily. FabH family.</text>
</comment>
<keyword id="KW-0012">Acyltransferase</keyword>
<keyword id="KW-0963">Cytoplasm</keyword>
<keyword id="KW-0275">Fatty acid biosynthesis</keyword>
<keyword id="KW-0276">Fatty acid metabolism</keyword>
<keyword id="KW-0444">Lipid biosynthesis</keyword>
<keyword id="KW-0443">Lipid metabolism</keyword>
<keyword id="KW-0511">Multifunctional enzyme</keyword>
<keyword id="KW-0808">Transferase</keyword>
<proteinExistence type="inferred from homology"/>
<accession>B1JYA0</accession>
<sequence length="329" mass="34905">MAQSTLYSRVLGTGSYLPPDRVTNQQLTDRLAKEGIETSDEWIVARTGIHARHFAAPDVTTSDLALEASRRAIEAAGVDPQSIDLIIVATSTPDFVFPSTACLLQNKLGIKNGGAAFDVQAVCSGFAYAMATADSFIRSGQHRTALIVGAETFSRILDFKDRTTCVLFGDGAGAVILSASEEPGVLGSALHADGSYSNILCTPGNVNRGVIDGSAFLHMDGQAVFKLAVNVLEKVAIEALAKANLAPEQIDWLIPHQANIRIMTSTCRKLGLPQERMVVTVDQHGNTSAASIPLALDAAVRDGRIQRGQHVLIEGVGGGFTWGASVFRF</sequence>
<organism>
    <name type="scientific">Burkholderia orbicola (strain MC0-3)</name>
    <dbReference type="NCBI Taxonomy" id="406425"/>
    <lineage>
        <taxon>Bacteria</taxon>
        <taxon>Pseudomonadati</taxon>
        <taxon>Pseudomonadota</taxon>
        <taxon>Betaproteobacteria</taxon>
        <taxon>Burkholderiales</taxon>
        <taxon>Burkholderiaceae</taxon>
        <taxon>Burkholderia</taxon>
        <taxon>Burkholderia cepacia complex</taxon>
        <taxon>Burkholderia orbicola</taxon>
    </lineage>
</organism>
<protein>
    <recommendedName>
        <fullName evidence="1">Beta-ketoacyl-[acyl-carrier-protein] synthase III</fullName>
        <shortName evidence="1">Beta-ketoacyl-ACP synthase III</shortName>
        <shortName evidence="1">KAS III</shortName>
        <ecNumber evidence="1">2.3.1.180</ecNumber>
    </recommendedName>
    <alternativeName>
        <fullName evidence="1">3-oxoacyl-[acyl-carrier-protein] synthase 3</fullName>
    </alternativeName>
    <alternativeName>
        <fullName evidence="1">3-oxoacyl-[acyl-carrier-protein] synthase III</fullName>
    </alternativeName>
</protein>
<name>FABH_BURO0</name>
<dbReference type="EC" id="2.3.1.180" evidence="1"/>
<dbReference type="EMBL" id="CP000958">
    <property type="protein sequence ID" value="ACA90256.1"/>
    <property type="molecule type" value="Genomic_DNA"/>
</dbReference>
<dbReference type="RefSeq" id="WP_006476506.1">
    <property type="nucleotide sequence ID" value="NC_010508.1"/>
</dbReference>
<dbReference type="SMR" id="B1JYA0"/>
<dbReference type="GeneID" id="83047873"/>
<dbReference type="KEGG" id="bcm:Bcenmc03_1079"/>
<dbReference type="HOGENOM" id="CLU_039592_3_1_4"/>
<dbReference type="UniPathway" id="UPA00094"/>
<dbReference type="Proteomes" id="UP000002169">
    <property type="component" value="Chromosome 1"/>
</dbReference>
<dbReference type="GO" id="GO:0005737">
    <property type="term" value="C:cytoplasm"/>
    <property type="evidence" value="ECO:0007669"/>
    <property type="project" value="UniProtKB-SubCell"/>
</dbReference>
<dbReference type="GO" id="GO:0004315">
    <property type="term" value="F:3-oxoacyl-[acyl-carrier-protein] synthase activity"/>
    <property type="evidence" value="ECO:0007669"/>
    <property type="project" value="InterPro"/>
</dbReference>
<dbReference type="GO" id="GO:0033818">
    <property type="term" value="F:beta-ketoacyl-acyl-carrier-protein synthase III activity"/>
    <property type="evidence" value="ECO:0007669"/>
    <property type="project" value="UniProtKB-UniRule"/>
</dbReference>
<dbReference type="GO" id="GO:0006633">
    <property type="term" value="P:fatty acid biosynthetic process"/>
    <property type="evidence" value="ECO:0007669"/>
    <property type="project" value="UniProtKB-UniRule"/>
</dbReference>
<dbReference type="GO" id="GO:0044550">
    <property type="term" value="P:secondary metabolite biosynthetic process"/>
    <property type="evidence" value="ECO:0007669"/>
    <property type="project" value="TreeGrafter"/>
</dbReference>
<dbReference type="CDD" id="cd00830">
    <property type="entry name" value="KAS_III"/>
    <property type="match status" value="1"/>
</dbReference>
<dbReference type="FunFam" id="3.40.47.10:FF:000004">
    <property type="entry name" value="3-oxoacyl-[acyl-carrier-protein] synthase 3"/>
    <property type="match status" value="1"/>
</dbReference>
<dbReference type="Gene3D" id="3.40.47.10">
    <property type="match status" value="2"/>
</dbReference>
<dbReference type="HAMAP" id="MF_01815">
    <property type="entry name" value="FabH"/>
    <property type="match status" value="1"/>
</dbReference>
<dbReference type="InterPro" id="IPR013747">
    <property type="entry name" value="ACP_syn_III_C"/>
</dbReference>
<dbReference type="InterPro" id="IPR013751">
    <property type="entry name" value="ACP_syn_III_N"/>
</dbReference>
<dbReference type="InterPro" id="IPR004655">
    <property type="entry name" value="FabH"/>
</dbReference>
<dbReference type="InterPro" id="IPR016039">
    <property type="entry name" value="Thiolase-like"/>
</dbReference>
<dbReference type="NCBIfam" id="TIGR00747">
    <property type="entry name" value="fabH"/>
    <property type="match status" value="1"/>
</dbReference>
<dbReference type="NCBIfam" id="NF006829">
    <property type="entry name" value="PRK09352.1"/>
    <property type="match status" value="1"/>
</dbReference>
<dbReference type="PANTHER" id="PTHR34069">
    <property type="entry name" value="3-OXOACYL-[ACYL-CARRIER-PROTEIN] SYNTHASE 3"/>
    <property type="match status" value="1"/>
</dbReference>
<dbReference type="PANTHER" id="PTHR34069:SF2">
    <property type="entry name" value="BETA-KETOACYL-[ACYL-CARRIER-PROTEIN] SYNTHASE III"/>
    <property type="match status" value="1"/>
</dbReference>
<dbReference type="Pfam" id="PF08545">
    <property type="entry name" value="ACP_syn_III"/>
    <property type="match status" value="1"/>
</dbReference>
<dbReference type="Pfam" id="PF08541">
    <property type="entry name" value="ACP_syn_III_C"/>
    <property type="match status" value="1"/>
</dbReference>
<dbReference type="SUPFAM" id="SSF53901">
    <property type="entry name" value="Thiolase-like"/>
    <property type="match status" value="1"/>
</dbReference>
<reference key="1">
    <citation type="submission" date="2008-02" db="EMBL/GenBank/DDBJ databases">
        <title>Complete sequence of chromosome 1 of Burkholderia cenocepacia MC0-3.</title>
        <authorList>
            <person name="Copeland A."/>
            <person name="Lucas S."/>
            <person name="Lapidus A."/>
            <person name="Barry K."/>
            <person name="Bruce D."/>
            <person name="Goodwin L."/>
            <person name="Glavina del Rio T."/>
            <person name="Dalin E."/>
            <person name="Tice H."/>
            <person name="Pitluck S."/>
            <person name="Chain P."/>
            <person name="Malfatti S."/>
            <person name="Shin M."/>
            <person name="Vergez L."/>
            <person name="Schmutz J."/>
            <person name="Larimer F."/>
            <person name="Land M."/>
            <person name="Hauser L."/>
            <person name="Kyrpides N."/>
            <person name="Mikhailova N."/>
            <person name="Tiedje J."/>
            <person name="Richardson P."/>
        </authorList>
    </citation>
    <scope>NUCLEOTIDE SEQUENCE [LARGE SCALE GENOMIC DNA]</scope>
    <source>
        <strain>MC0-3</strain>
    </source>
</reference>
<feature type="chain" id="PRO_1000187853" description="Beta-ketoacyl-[acyl-carrier-protein] synthase III">
    <location>
        <begin position="1"/>
        <end position="329"/>
    </location>
</feature>
<feature type="region of interest" description="ACP-binding" evidence="1">
    <location>
        <begin position="257"/>
        <end position="261"/>
    </location>
</feature>
<feature type="active site" evidence="1">
    <location>
        <position position="123"/>
    </location>
</feature>
<feature type="active site" evidence="1">
    <location>
        <position position="256"/>
    </location>
</feature>
<feature type="active site" evidence="1">
    <location>
        <position position="286"/>
    </location>
</feature>
<evidence type="ECO:0000255" key="1">
    <source>
        <dbReference type="HAMAP-Rule" id="MF_01815"/>
    </source>
</evidence>
<gene>
    <name evidence="1" type="primary">fabH</name>
    <name type="ordered locus">Bcenmc03_1079</name>
</gene>